<organism>
    <name type="scientific">Rhodopseudomonas palustris (strain HaA2)</name>
    <dbReference type="NCBI Taxonomy" id="316058"/>
    <lineage>
        <taxon>Bacteria</taxon>
        <taxon>Pseudomonadati</taxon>
        <taxon>Pseudomonadota</taxon>
        <taxon>Alphaproteobacteria</taxon>
        <taxon>Hyphomicrobiales</taxon>
        <taxon>Nitrobacteraceae</taxon>
        <taxon>Rhodopseudomonas</taxon>
    </lineage>
</organism>
<feature type="chain" id="PRO_0000247693" description="NADPH-dependent 7-cyano-7-deazaguanine reductase">
    <location>
        <begin position="1"/>
        <end position="158"/>
    </location>
</feature>
<feature type="active site" description="Thioimide intermediate" evidence="1">
    <location>
        <position position="56"/>
    </location>
</feature>
<feature type="active site" description="Proton donor" evidence="1">
    <location>
        <position position="63"/>
    </location>
</feature>
<feature type="binding site" evidence="1">
    <location>
        <begin position="78"/>
        <end position="80"/>
    </location>
    <ligand>
        <name>substrate</name>
    </ligand>
</feature>
<feature type="binding site" evidence="1">
    <location>
        <begin position="97"/>
        <end position="98"/>
    </location>
    <ligand>
        <name>substrate</name>
    </ligand>
</feature>
<evidence type="ECO:0000255" key="1">
    <source>
        <dbReference type="HAMAP-Rule" id="MF_00818"/>
    </source>
</evidence>
<sequence length="158" mass="17439">MSRSPRKTSKSAGLQLGRAVAWPATPDAAQIDRVPNPQAGTDYLVRFTAPEFTSLCPVTGQPDFAHLVIDYAPGAWLVESKSLKLYLASFRNHGGFHEDCTVSIGKRIAAEIKPKWLRIGGYWYPRGGIPIDVFWQTGKLPKNVWVPDQGVATYRGRG</sequence>
<comment type="function">
    <text evidence="1">Catalyzes the NADPH-dependent reduction of 7-cyano-7-deazaguanine (preQ0) to 7-aminomethyl-7-deazaguanine (preQ1).</text>
</comment>
<comment type="catalytic activity">
    <reaction evidence="1">
        <text>7-aminomethyl-7-carbaguanine + 2 NADP(+) = 7-cyano-7-deazaguanine + 2 NADPH + 3 H(+)</text>
        <dbReference type="Rhea" id="RHEA:13409"/>
        <dbReference type="ChEBI" id="CHEBI:15378"/>
        <dbReference type="ChEBI" id="CHEBI:45075"/>
        <dbReference type="ChEBI" id="CHEBI:57783"/>
        <dbReference type="ChEBI" id="CHEBI:58349"/>
        <dbReference type="ChEBI" id="CHEBI:58703"/>
        <dbReference type="EC" id="1.7.1.13"/>
    </reaction>
</comment>
<comment type="pathway">
    <text evidence="1">tRNA modification; tRNA-queuosine biosynthesis.</text>
</comment>
<comment type="subcellular location">
    <subcellularLocation>
        <location evidence="1">Cytoplasm</location>
    </subcellularLocation>
</comment>
<comment type="similarity">
    <text evidence="1">Belongs to the GTP cyclohydrolase I family. QueF type 1 subfamily.</text>
</comment>
<proteinExistence type="inferred from homology"/>
<reference key="1">
    <citation type="submission" date="2006-01" db="EMBL/GenBank/DDBJ databases">
        <title>Complete sequence of Rhodopseudomonas palustris HaA2.</title>
        <authorList>
            <consortium name="US DOE Joint Genome Institute"/>
            <person name="Copeland A."/>
            <person name="Lucas S."/>
            <person name="Lapidus A."/>
            <person name="Barry K."/>
            <person name="Detter J.C."/>
            <person name="Glavina T."/>
            <person name="Hammon N."/>
            <person name="Israni S."/>
            <person name="Pitluck S."/>
            <person name="Chain P."/>
            <person name="Malfatti S."/>
            <person name="Shin M."/>
            <person name="Vergez L."/>
            <person name="Schmutz J."/>
            <person name="Larimer F."/>
            <person name="Land M."/>
            <person name="Hauser L."/>
            <person name="Pelletier D.A."/>
            <person name="Kyrpides N."/>
            <person name="Anderson I."/>
            <person name="Oda Y."/>
            <person name="Harwood C.S."/>
            <person name="Richardson P."/>
        </authorList>
    </citation>
    <scope>NUCLEOTIDE SEQUENCE [LARGE SCALE GENOMIC DNA]</scope>
    <source>
        <strain>HaA2</strain>
    </source>
</reference>
<name>QUEF_RHOP2</name>
<keyword id="KW-0963">Cytoplasm</keyword>
<keyword id="KW-0521">NADP</keyword>
<keyword id="KW-0560">Oxidoreductase</keyword>
<keyword id="KW-0671">Queuosine biosynthesis</keyword>
<keyword id="KW-1185">Reference proteome</keyword>
<gene>
    <name evidence="1" type="primary">queF</name>
    <name type="ordered locus">RPB_2779</name>
</gene>
<accession>Q2IWC9</accession>
<dbReference type="EC" id="1.7.1.13" evidence="1"/>
<dbReference type="EMBL" id="CP000250">
    <property type="protein sequence ID" value="ABD07481.1"/>
    <property type="molecule type" value="Genomic_DNA"/>
</dbReference>
<dbReference type="RefSeq" id="WP_011441666.1">
    <property type="nucleotide sequence ID" value="NC_007778.1"/>
</dbReference>
<dbReference type="SMR" id="Q2IWC9"/>
<dbReference type="STRING" id="316058.RPB_2779"/>
<dbReference type="KEGG" id="rpb:RPB_2779"/>
<dbReference type="eggNOG" id="COG0780">
    <property type="taxonomic scope" value="Bacteria"/>
</dbReference>
<dbReference type="HOGENOM" id="CLU_102489_0_1_5"/>
<dbReference type="OrthoDB" id="9789995at2"/>
<dbReference type="UniPathway" id="UPA00392"/>
<dbReference type="Proteomes" id="UP000008809">
    <property type="component" value="Chromosome"/>
</dbReference>
<dbReference type="GO" id="GO:0005737">
    <property type="term" value="C:cytoplasm"/>
    <property type="evidence" value="ECO:0007669"/>
    <property type="project" value="UniProtKB-SubCell"/>
</dbReference>
<dbReference type="GO" id="GO:0033739">
    <property type="term" value="F:preQ1 synthase activity"/>
    <property type="evidence" value="ECO:0007669"/>
    <property type="project" value="UniProtKB-UniRule"/>
</dbReference>
<dbReference type="GO" id="GO:0008616">
    <property type="term" value="P:queuosine biosynthetic process"/>
    <property type="evidence" value="ECO:0007669"/>
    <property type="project" value="UniProtKB-UniRule"/>
</dbReference>
<dbReference type="GO" id="GO:0006400">
    <property type="term" value="P:tRNA modification"/>
    <property type="evidence" value="ECO:0007669"/>
    <property type="project" value="UniProtKB-UniRule"/>
</dbReference>
<dbReference type="Gene3D" id="3.30.1130.10">
    <property type="match status" value="1"/>
</dbReference>
<dbReference type="HAMAP" id="MF_00818">
    <property type="entry name" value="QueF_type1"/>
    <property type="match status" value="1"/>
</dbReference>
<dbReference type="InterPro" id="IPR043133">
    <property type="entry name" value="GTP-CH-I_C/QueF"/>
</dbReference>
<dbReference type="InterPro" id="IPR050084">
    <property type="entry name" value="NADPH_dep_7-cyano-7-deazaG_red"/>
</dbReference>
<dbReference type="InterPro" id="IPR029500">
    <property type="entry name" value="QueF"/>
</dbReference>
<dbReference type="InterPro" id="IPR016856">
    <property type="entry name" value="QueF_type1"/>
</dbReference>
<dbReference type="NCBIfam" id="TIGR03139">
    <property type="entry name" value="QueF-II"/>
    <property type="match status" value="1"/>
</dbReference>
<dbReference type="PANTHER" id="PTHR34354">
    <property type="entry name" value="NADPH-DEPENDENT 7-CYANO-7-DEAZAGUANINE REDUCTASE"/>
    <property type="match status" value="1"/>
</dbReference>
<dbReference type="PANTHER" id="PTHR34354:SF1">
    <property type="entry name" value="NADPH-DEPENDENT 7-CYANO-7-DEAZAGUANINE REDUCTASE"/>
    <property type="match status" value="1"/>
</dbReference>
<dbReference type="Pfam" id="PF14489">
    <property type="entry name" value="QueF"/>
    <property type="match status" value="1"/>
</dbReference>
<dbReference type="SUPFAM" id="SSF55620">
    <property type="entry name" value="Tetrahydrobiopterin biosynthesis enzymes-like"/>
    <property type="match status" value="1"/>
</dbReference>
<protein>
    <recommendedName>
        <fullName evidence="1">NADPH-dependent 7-cyano-7-deazaguanine reductase</fullName>
        <ecNumber evidence="1">1.7.1.13</ecNumber>
    </recommendedName>
    <alternativeName>
        <fullName evidence="1">7-cyano-7-carbaguanine reductase</fullName>
    </alternativeName>
    <alternativeName>
        <fullName evidence="1">NADPH-dependent nitrile oxidoreductase</fullName>
    </alternativeName>
    <alternativeName>
        <fullName evidence="1">PreQ(0) reductase</fullName>
    </alternativeName>
</protein>